<feature type="chain" id="PRO_1000188735" description="Error-prone DNA polymerase">
    <location>
        <begin position="1"/>
        <end position="1083"/>
    </location>
</feature>
<accession>B2SI43</accession>
<organism>
    <name type="scientific">Xanthomonas oryzae pv. oryzae (strain PXO99A)</name>
    <dbReference type="NCBI Taxonomy" id="360094"/>
    <lineage>
        <taxon>Bacteria</taxon>
        <taxon>Pseudomonadati</taxon>
        <taxon>Pseudomonadota</taxon>
        <taxon>Gammaproteobacteria</taxon>
        <taxon>Lysobacterales</taxon>
        <taxon>Lysobacteraceae</taxon>
        <taxon>Xanthomonas</taxon>
    </lineage>
</organism>
<gene>
    <name evidence="1" type="primary">dnaE2</name>
    <name type="ordered locus">PXO_02092</name>
</gene>
<sequence length="1083" mass="120478">MSWDDAIEGVDRDTPGGRMPRAWNVAARLRAANDDISHAHVADGVPTYAELHCLSDFSFLRGASSAEQLFARAQHCGYSALAITDECSLAGIVRGLEASRVTGVRLIVGSEFTLIDGTRFVLLVENAHGYPQVCGLVTTARRAASKGAYRLGRADVEAQFRDVAPGVFALWLPGVQPQAEQGAWLQQVFGERAFLAVELHREQDDGARLQVLQALAQQLGMTAVASGDVHMAQRRERIVQDTLTAIRHTLPLAECGAHLFRNGERHLRTRRALGNIYPDALLQAAVALAQRCTFDISKISYTYPRELVPEGHTPTSYLRQLTEAGIRKRWPGGITAKVREDIEKELALIALKKYEAFFLTVQDVVRFAREQNILCQGRGSSANSAVCYALGITAVNPDETRLLMARFLSEKRDEPPDIDVDFEHERREEVLQYVYRKYGRERAALAATVICYRGKSAVRDVAKAFGLPPDQIALLANCYGWGNGETPMEQRIEEAGFDLANPLINKILLVTEHLRDHPRHLSQHVGGFVISDEPLSLLVPVENAAMADRTIIQWDKDDLETMKLLKVDCLALGMLTCIRKTLDLVRGHRGRDYSIATLPGEDLPTYKMIQRADTVGVFQIESRAQMAMLPRLKPAEFYDLVIEVAIVRPGPIQGDMVHPYLRRRQGREDVSYPSPAVEDILKPTLGVPLFQEQVMELLMHAADYTESEADNLRRSMAAWRRGGDMEQHRTRVRERMQGKGYASTFIDQIFEQIKGFGSYGFPQSHAASFAKLVYASCWLKRHEPAAFACGLLNAQPMGFYSASQIVQDARRGSPERERVEVLPVDVVHSDWDNTLVGGRPWRSAADPGEQPAIRLGMRQVAGLSDVVAQRIVAARTQRAFADIGDLCLRAALDEKARLALAEAGALQGMVGNRNAARWAMAGVEARRPLLPGSPEERPVAFEAPHAGEEILADYRSVGLSLRQHPMALLRPQMRQRRILGLRDLQGRPHGSGVHVAGLVTQRQRPATAKGTIFVTLEDEHGMINVIVWSHLALRRRRALLESRLLAVRGRWERVDGVEHLIAGDLHDLSDLLGDMQLPSRDFH</sequence>
<proteinExistence type="inferred from homology"/>
<comment type="function">
    <text evidence="1">DNA polymerase involved in damage-induced mutagenesis and translesion synthesis (TLS). It is not the major replicative DNA polymerase.</text>
</comment>
<comment type="catalytic activity">
    <reaction evidence="1">
        <text>DNA(n) + a 2'-deoxyribonucleoside 5'-triphosphate = DNA(n+1) + diphosphate</text>
        <dbReference type="Rhea" id="RHEA:22508"/>
        <dbReference type="Rhea" id="RHEA-COMP:17339"/>
        <dbReference type="Rhea" id="RHEA-COMP:17340"/>
        <dbReference type="ChEBI" id="CHEBI:33019"/>
        <dbReference type="ChEBI" id="CHEBI:61560"/>
        <dbReference type="ChEBI" id="CHEBI:173112"/>
        <dbReference type="EC" id="2.7.7.7"/>
    </reaction>
</comment>
<comment type="subcellular location">
    <subcellularLocation>
        <location evidence="1">Cytoplasm</location>
    </subcellularLocation>
</comment>
<comment type="similarity">
    <text evidence="1">Belongs to the DNA polymerase type-C family. DnaE2 subfamily.</text>
</comment>
<dbReference type="EC" id="2.7.7.7" evidence="1"/>
<dbReference type="EMBL" id="CP000967">
    <property type="protein sequence ID" value="ACD60285.1"/>
    <property type="molecule type" value="Genomic_DNA"/>
</dbReference>
<dbReference type="RefSeq" id="WP_012445640.1">
    <property type="nucleotide sequence ID" value="NC_010717.2"/>
</dbReference>
<dbReference type="SMR" id="B2SI43"/>
<dbReference type="KEGG" id="xop:PXO_02092"/>
<dbReference type="eggNOG" id="COG0587">
    <property type="taxonomic scope" value="Bacteria"/>
</dbReference>
<dbReference type="HOGENOM" id="CLU_001600_4_0_6"/>
<dbReference type="Proteomes" id="UP000001740">
    <property type="component" value="Chromosome"/>
</dbReference>
<dbReference type="GO" id="GO:0005737">
    <property type="term" value="C:cytoplasm"/>
    <property type="evidence" value="ECO:0007669"/>
    <property type="project" value="UniProtKB-SubCell"/>
</dbReference>
<dbReference type="GO" id="GO:0008408">
    <property type="term" value="F:3'-5' exonuclease activity"/>
    <property type="evidence" value="ECO:0007669"/>
    <property type="project" value="InterPro"/>
</dbReference>
<dbReference type="GO" id="GO:0003887">
    <property type="term" value="F:DNA-directed DNA polymerase activity"/>
    <property type="evidence" value="ECO:0007669"/>
    <property type="project" value="UniProtKB-UniRule"/>
</dbReference>
<dbReference type="GO" id="GO:0003676">
    <property type="term" value="F:nucleic acid binding"/>
    <property type="evidence" value="ECO:0007669"/>
    <property type="project" value="InterPro"/>
</dbReference>
<dbReference type="GO" id="GO:0006281">
    <property type="term" value="P:DNA repair"/>
    <property type="evidence" value="ECO:0007669"/>
    <property type="project" value="UniProtKB-UniRule"/>
</dbReference>
<dbReference type="GO" id="GO:0006260">
    <property type="term" value="P:DNA replication"/>
    <property type="evidence" value="ECO:0007669"/>
    <property type="project" value="UniProtKB-KW"/>
</dbReference>
<dbReference type="CDD" id="cd04485">
    <property type="entry name" value="DnaE_OBF"/>
    <property type="match status" value="1"/>
</dbReference>
<dbReference type="CDD" id="cd07434">
    <property type="entry name" value="PHP_PolIIIA_DnaE2"/>
    <property type="match status" value="1"/>
</dbReference>
<dbReference type="Gene3D" id="1.10.150.870">
    <property type="match status" value="1"/>
</dbReference>
<dbReference type="Gene3D" id="3.20.20.140">
    <property type="entry name" value="Metal-dependent hydrolases"/>
    <property type="match status" value="1"/>
</dbReference>
<dbReference type="HAMAP" id="MF_01902">
    <property type="entry name" value="DNApol_error_prone"/>
    <property type="match status" value="1"/>
</dbReference>
<dbReference type="InterPro" id="IPR011708">
    <property type="entry name" value="DNA_pol3_alpha_NTPase_dom"/>
</dbReference>
<dbReference type="InterPro" id="IPR040982">
    <property type="entry name" value="DNA_pol3_finger"/>
</dbReference>
<dbReference type="InterPro" id="IPR023073">
    <property type="entry name" value="DnaE2"/>
</dbReference>
<dbReference type="InterPro" id="IPR004805">
    <property type="entry name" value="DnaE2/DnaE/PolC"/>
</dbReference>
<dbReference type="InterPro" id="IPR029460">
    <property type="entry name" value="DNAPol_HHH"/>
</dbReference>
<dbReference type="InterPro" id="IPR004365">
    <property type="entry name" value="NA-bd_OB_tRNA"/>
</dbReference>
<dbReference type="InterPro" id="IPR004013">
    <property type="entry name" value="PHP_dom"/>
</dbReference>
<dbReference type="InterPro" id="IPR003141">
    <property type="entry name" value="Pol/His_phosphatase_N"/>
</dbReference>
<dbReference type="InterPro" id="IPR016195">
    <property type="entry name" value="Pol/histidinol_Pase-like"/>
</dbReference>
<dbReference type="NCBIfam" id="TIGR00594">
    <property type="entry name" value="polc"/>
    <property type="match status" value="1"/>
</dbReference>
<dbReference type="NCBIfam" id="NF004225">
    <property type="entry name" value="PRK05672.1"/>
    <property type="match status" value="1"/>
</dbReference>
<dbReference type="PANTHER" id="PTHR32294">
    <property type="entry name" value="DNA POLYMERASE III SUBUNIT ALPHA"/>
    <property type="match status" value="1"/>
</dbReference>
<dbReference type="PANTHER" id="PTHR32294:SF4">
    <property type="entry name" value="ERROR-PRONE DNA POLYMERASE"/>
    <property type="match status" value="1"/>
</dbReference>
<dbReference type="Pfam" id="PF07733">
    <property type="entry name" value="DNA_pol3_alpha"/>
    <property type="match status" value="1"/>
</dbReference>
<dbReference type="Pfam" id="PF17657">
    <property type="entry name" value="DNA_pol3_finger"/>
    <property type="match status" value="1"/>
</dbReference>
<dbReference type="Pfam" id="PF14579">
    <property type="entry name" value="HHH_6"/>
    <property type="match status" value="1"/>
</dbReference>
<dbReference type="Pfam" id="PF02811">
    <property type="entry name" value="PHP"/>
    <property type="match status" value="1"/>
</dbReference>
<dbReference type="Pfam" id="PF01336">
    <property type="entry name" value="tRNA_anti-codon"/>
    <property type="match status" value="1"/>
</dbReference>
<dbReference type="SMART" id="SM00481">
    <property type="entry name" value="POLIIIAc"/>
    <property type="match status" value="1"/>
</dbReference>
<dbReference type="SUPFAM" id="SSF89550">
    <property type="entry name" value="PHP domain-like"/>
    <property type="match status" value="1"/>
</dbReference>
<reference key="1">
    <citation type="journal article" date="2008" name="BMC Genomics">
        <title>Genome sequence and rapid evolution of the rice pathogen Xanthomonas oryzae pv. oryzae PXO99A.</title>
        <authorList>
            <person name="Salzberg S.L."/>
            <person name="Sommer D.D."/>
            <person name="Schatz M.C."/>
            <person name="Phillippy A.M."/>
            <person name="Rabinowicz P.D."/>
            <person name="Tsuge S."/>
            <person name="Furutani A."/>
            <person name="Ochiai H."/>
            <person name="Delcher A.L."/>
            <person name="Kelley D."/>
            <person name="Madupu R."/>
            <person name="Puiu D."/>
            <person name="Radune D."/>
            <person name="Shumway M."/>
            <person name="Trapnell C."/>
            <person name="Aparna G."/>
            <person name="Jha G."/>
            <person name="Pandey A."/>
            <person name="Patil P.B."/>
            <person name="Ishihara H."/>
            <person name="Meyer D.F."/>
            <person name="Szurek B."/>
            <person name="Verdier V."/>
            <person name="Koebnik R."/>
            <person name="Dow J.M."/>
            <person name="Ryan R.P."/>
            <person name="Hirata H."/>
            <person name="Tsuyumu S."/>
            <person name="Won Lee S."/>
            <person name="Seo Y.-S."/>
            <person name="Sriariyanum M."/>
            <person name="Ronald P.C."/>
            <person name="Sonti R.V."/>
            <person name="Van Sluys M.-A."/>
            <person name="Leach J.E."/>
            <person name="White F.F."/>
            <person name="Bogdanove A.J."/>
        </authorList>
    </citation>
    <scope>NUCLEOTIDE SEQUENCE [LARGE SCALE GENOMIC DNA]</scope>
    <source>
        <strain>PXO99A</strain>
    </source>
</reference>
<evidence type="ECO:0000255" key="1">
    <source>
        <dbReference type="HAMAP-Rule" id="MF_01902"/>
    </source>
</evidence>
<protein>
    <recommendedName>
        <fullName evidence="1">Error-prone DNA polymerase</fullName>
        <ecNumber evidence="1">2.7.7.7</ecNumber>
    </recommendedName>
</protein>
<name>DNAE2_XANOP</name>
<keyword id="KW-0963">Cytoplasm</keyword>
<keyword id="KW-0227">DNA damage</keyword>
<keyword id="KW-0234">DNA repair</keyword>
<keyword id="KW-0235">DNA replication</keyword>
<keyword id="KW-0239">DNA-directed DNA polymerase</keyword>
<keyword id="KW-0548">Nucleotidyltransferase</keyword>
<keyword id="KW-0808">Transferase</keyword>